<evidence type="ECO:0000250" key="1"/>
<evidence type="ECO:0000255" key="2"/>
<evidence type="ECO:0000305" key="3"/>
<dbReference type="EMBL" id="DQ141153">
    <property type="protein sequence ID" value="AAZ83754.1"/>
    <property type="molecule type" value="mRNA"/>
</dbReference>
<dbReference type="TCDB" id="8.B.16.2.2">
    <property type="family name" value="the maurocalcine (maca) family"/>
</dbReference>
<dbReference type="ConoServer" id="1114">
    <property type="toxin name" value="TeA53 precursor"/>
</dbReference>
<dbReference type="GO" id="GO:0005576">
    <property type="term" value="C:extracellular region"/>
    <property type="evidence" value="ECO:0007669"/>
    <property type="project" value="UniProtKB-SubCell"/>
</dbReference>
<dbReference type="GO" id="GO:0008200">
    <property type="term" value="F:ion channel inhibitor activity"/>
    <property type="evidence" value="ECO:0007669"/>
    <property type="project" value="InterPro"/>
</dbReference>
<dbReference type="GO" id="GO:0090729">
    <property type="term" value="F:toxin activity"/>
    <property type="evidence" value="ECO:0007669"/>
    <property type="project" value="UniProtKB-KW"/>
</dbReference>
<dbReference type="InterPro" id="IPR004214">
    <property type="entry name" value="Conotoxin"/>
</dbReference>
<dbReference type="Pfam" id="PF02950">
    <property type="entry name" value="Conotoxin"/>
    <property type="match status" value="1"/>
</dbReference>
<sequence length="81" mass="9507">MQKLTILLLVAAVLMSTQALNQEQHQRAKINLLSKRKPPAERWWRWGGCMLWFGRCTKDSECCSNSCDRTYCELARFPSDW</sequence>
<feature type="signal peptide" evidence="2">
    <location>
        <begin position="1"/>
        <end position="19"/>
    </location>
</feature>
<feature type="propeptide" id="PRO_0000404796" evidence="1">
    <location>
        <begin position="20"/>
        <end position="42"/>
    </location>
</feature>
<feature type="peptide" id="PRO_0000404797" description="Gamma-conotoxin-like TeA53">
    <location>
        <begin position="43"/>
        <end position="81"/>
    </location>
</feature>
<feature type="disulfide bond" evidence="1">
    <location>
        <begin position="49"/>
        <end position="63"/>
    </location>
</feature>
<feature type="disulfide bond" evidence="1">
    <location>
        <begin position="56"/>
        <end position="67"/>
    </location>
</feature>
<feature type="disulfide bond" evidence="1">
    <location>
        <begin position="62"/>
        <end position="72"/>
    </location>
</feature>
<comment type="function">
    <text evidence="1">Gamma-conotoxins may act on voltage-gated non-specific cation pacemaker channels (HCN).</text>
</comment>
<comment type="subcellular location">
    <subcellularLocation>
        <location evidence="1">Secreted</location>
    </subcellularLocation>
</comment>
<comment type="tissue specificity">
    <text>Expressed by the venom duct.</text>
</comment>
<comment type="domain">
    <text evidence="1">The presence of a 'disulfide through disulfide knot' structurally defines this protein as a knottin.</text>
</comment>
<comment type="domain">
    <text>The cysteine framework is VI/VII (C-C-CC-C-C).</text>
</comment>
<comment type="similarity">
    <text evidence="3">Belongs to the conotoxin O2 superfamily.</text>
</comment>
<name>O253_CONTE</name>
<proteinExistence type="evidence at transcript level"/>
<keyword id="KW-1015">Disulfide bond</keyword>
<keyword id="KW-0872">Ion channel impairing toxin</keyword>
<keyword id="KW-0960">Knottin</keyword>
<keyword id="KW-0528">Neurotoxin</keyword>
<keyword id="KW-0964">Secreted</keyword>
<keyword id="KW-0732">Signal</keyword>
<keyword id="KW-0800">Toxin</keyword>
<organism>
    <name type="scientific">Conus textile</name>
    <name type="common">Cloth-of-gold cone</name>
    <dbReference type="NCBI Taxonomy" id="6494"/>
    <lineage>
        <taxon>Eukaryota</taxon>
        <taxon>Metazoa</taxon>
        <taxon>Spiralia</taxon>
        <taxon>Lophotrochozoa</taxon>
        <taxon>Mollusca</taxon>
        <taxon>Gastropoda</taxon>
        <taxon>Caenogastropoda</taxon>
        <taxon>Neogastropoda</taxon>
        <taxon>Conoidea</taxon>
        <taxon>Conidae</taxon>
        <taxon>Conus</taxon>
        <taxon>Cylinder</taxon>
    </lineage>
</organism>
<protein>
    <recommendedName>
        <fullName>Gamma-conotoxin-like TeA53</fullName>
    </recommendedName>
</protein>
<reference key="1">
    <citation type="submission" date="2005-07" db="EMBL/GenBank/DDBJ databases">
        <title>Novel O-superfamily conotoxins, and their coding polynucleotides and use.</title>
        <authorList>
            <person name="Luo S."/>
            <person name="Zhangsun D."/>
            <person name="Zhang B."/>
            <person name="Lin Q."/>
        </authorList>
    </citation>
    <scope>NUCLEOTIDE SEQUENCE [MRNA]</scope>
</reference>
<accession>Q3YEG0</accession>